<name>RL2_ECOLU</name>
<keyword id="KW-0007">Acetylation</keyword>
<keyword id="KW-0687">Ribonucleoprotein</keyword>
<keyword id="KW-0689">Ribosomal protein</keyword>
<keyword id="KW-0694">RNA-binding</keyword>
<keyword id="KW-0699">rRNA-binding</keyword>
<feature type="chain" id="PRO_1000141548" description="Large ribosomal subunit protein uL2">
    <location>
        <begin position="1"/>
        <end position="273"/>
    </location>
</feature>
<feature type="region of interest" description="Disordered" evidence="2">
    <location>
        <begin position="28"/>
        <end position="53"/>
    </location>
</feature>
<feature type="region of interest" description="Disordered" evidence="2">
    <location>
        <begin position="221"/>
        <end position="273"/>
    </location>
</feature>
<feature type="compositionally biased region" description="Low complexity" evidence="2">
    <location>
        <begin position="39"/>
        <end position="48"/>
    </location>
</feature>
<feature type="modified residue" description="N6-acetyllysine" evidence="1">
    <location>
        <position position="242"/>
    </location>
</feature>
<proteinExistence type="inferred from homology"/>
<dbReference type="EMBL" id="CU928163">
    <property type="protein sequence ID" value="CAR14938.1"/>
    <property type="molecule type" value="Genomic_DNA"/>
</dbReference>
<dbReference type="RefSeq" id="WP_000301864.1">
    <property type="nucleotide sequence ID" value="NC_011751.1"/>
</dbReference>
<dbReference type="RefSeq" id="YP_002414443.1">
    <property type="nucleotide sequence ID" value="NC_011751.1"/>
</dbReference>
<dbReference type="SMR" id="B7NDT8"/>
<dbReference type="STRING" id="585056.ECUMN_3790"/>
<dbReference type="GeneID" id="93778670"/>
<dbReference type="KEGG" id="eum:ECUMN_3790"/>
<dbReference type="PATRIC" id="fig|585056.7.peg.3965"/>
<dbReference type="HOGENOM" id="CLU_036235_2_1_6"/>
<dbReference type="PRO" id="PR:B7NDT8"/>
<dbReference type="Proteomes" id="UP000007097">
    <property type="component" value="Chromosome"/>
</dbReference>
<dbReference type="GO" id="GO:0005829">
    <property type="term" value="C:cytosol"/>
    <property type="evidence" value="ECO:0007669"/>
    <property type="project" value="UniProtKB-ARBA"/>
</dbReference>
<dbReference type="GO" id="GO:0015934">
    <property type="term" value="C:large ribosomal subunit"/>
    <property type="evidence" value="ECO:0007669"/>
    <property type="project" value="InterPro"/>
</dbReference>
<dbReference type="GO" id="GO:0019843">
    <property type="term" value="F:rRNA binding"/>
    <property type="evidence" value="ECO:0007669"/>
    <property type="project" value="UniProtKB-UniRule"/>
</dbReference>
<dbReference type="GO" id="GO:0003735">
    <property type="term" value="F:structural constituent of ribosome"/>
    <property type="evidence" value="ECO:0007669"/>
    <property type="project" value="InterPro"/>
</dbReference>
<dbReference type="GO" id="GO:0016740">
    <property type="term" value="F:transferase activity"/>
    <property type="evidence" value="ECO:0007669"/>
    <property type="project" value="InterPro"/>
</dbReference>
<dbReference type="GO" id="GO:0002181">
    <property type="term" value="P:cytoplasmic translation"/>
    <property type="evidence" value="ECO:0007669"/>
    <property type="project" value="TreeGrafter"/>
</dbReference>
<dbReference type="FunFam" id="2.30.30.30:FF:000001">
    <property type="entry name" value="50S ribosomal protein L2"/>
    <property type="match status" value="1"/>
</dbReference>
<dbReference type="FunFam" id="2.40.50.140:FF:000003">
    <property type="entry name" value="50S ribosomal protein L2"/>
    <property type="match status" value="1"/>
</dbReference>
<dbReference type="FunFam" id="4.10.950.10:FF:000001">
    <property type="entry name" value="50S ribosomal protein L2"/>
    <property type="match status" value="1"/>
</dbReference>
<dbReference type="Gene3D" id="2.30.30.30">
    <property type="match status" value="1"/>
</dbReference>
<dbReference type="Gene3D" id="2.40.50.140">
    <property type="entry name" value="Nucleic acid-binding proteins"/>
    <property type="match status" value="1"/>
</dbReference>
<dbReference type="Gene3D" id="4.10.950.10">
    <property type="entry name" value="Ribosomal protein L2, domain 3"/>
    <property type="match status" value="1"/>
</dbReference>
<dbReference type="HAMAP" id="MF_01320_B">
    <property type="entry name" value="Ribosomal_uL2_B"/>
    <property type="match status" value="1"/>
</dbReference>
<dbReference type="InterPro" id="IPR012340">
    <property type="entry name" value="NA-bd_OB-fold"/>
</dbReference>
<dbReference type="InterPro" id="IPR014722">
    <property type="entry name" value="Rib_uL2_dom2"/>
</dbReference>
<dbReference type="InterPro" id="IPR002171">
    <property type="entry name" value="Ribosomal_uL2"/>
</dbReference>
<dbReference type="InterPro" id="IPR005880">
    <property type="entry name" value="Ribosomal_uL2_bac/org-type"/>
</dbReference>
<dbReference type="InterPro" id="IPR022669">
    <property type="entry name" value="Ribosomal_uL2_C"/>
</dbReference>
<dbReference type="InterPro" id="IPR022671">
    <property type="entry name" value="Ribosomal_uL2_CS"/>
</dbReference>
<dbReference type="InterPro" id="IPR014726">
    <property type="entry name" value="Ribosomal_uL2_dom3"/>
</dbReference>
<dbReference type="InterPro" id="IPR022666">
    <property type="entry name" value="Ribosomal_uL2_RNA-bd_dom"/>
</dbReference>
<dbReference type="InterPro" id="IPR008991">
    <property type="entry name" value="Translation_prot_SH3-like_sf"/>
</dbReference>
<dbReference type="NCBIfam" id="TIGR01171">
    <property type="entry name" value="rplB_bact"/>
    <property type="match status" value="1"/>
</dbReference>
<dbReference type="PANTHER" id="PTHR13691:SF5">
    <property type="entry name" value="LARGE RIBOSOMAL SUBUNIT PROTEIN UL2M"/>
    <property type="match status" value="1"/>
</dbReference>
<dbReference type="PANTHER" id="PTHR13691">
    <property type="entry name" value="RIBOSOMAL PROTEIN L2"/>
    <property type="match status" value="1"/>
</dbReference>
<dbReference type="Pfam" id="PF00181">
    <property type="entry name" value="Ribosomal_L2"/>
    <property type="match status" value="1"/>
</dbReference>
<dbReference type="Pfam" id="PF03947">
    <property type="entry name" value="Ribosomal_L2_C"/>
    <property type="match status" value="1"/>
</dbReference>
<dbReference type="PIRSF" id="PIRSF002158">
    <property type="entry name" value="Ribosomal_L2"/>
    <property type="match status" value="1"/>
</dbReference>
<dbReference type="SMART" id="SM01383">
    <property type="entry name" value="Ribosomal_L2"/>
    <property type="match status" value="1"/>
</dbReference>
<dbReference type="SMART" id="SM01382">
    <property type="entry name" value="Ribosomal_L2_C"/>
    <property type="match status" value="1"/>
</dbReference>
<dbReference type="SUPFAM" id="SSF50249">
    <property type="entry name" value="Nucleic acid-binding proteins"/>
    <property type="match status" value="1"/>
</dbReference>
<dbReference type="SUPFAM" id="SSF50104">
    <property type="entry name" value="Translation proteins SH3-like domain"/>
    <property type="match status" value="1"/>
</dbReference>
<dbReference type="PROSITE" id="PS00467">
    <property type="entry name" value="RIBOSOMAL_L2"/>
    <property type="match status" value="1"/>
</dbReference>
<comment type="function">
    <text evidence="1">One of the primary rRNA binding proteins. Required for association of the 30S and 50S subunits to form the 70S ribosome, for tRNA binding and peptide bond formation. It has been suggested to have peptidyltransferase activity; this is somewhat controversial. Makes several contacts with the 16S rRNA in the 70S ribosome.</text>
</comment>
<comment type="subunit">
    <text evidence="1">Part of the 50S ribosomal subunit. Forms a bridge to the 30S subunit in the 70S ribosome.</text>
</comment>
<comment type="similarity">
    <text evidence="1">Belongs to the universal ribosomal protein uL2 family.</text>
</comment>
<accession>B7NDT8</accession>
<organism>
    <name type="scientific">Escherichia coli O17:K52:H18 (strain UMN026 / ExPEC)</name>
    <dbReference type="NCBI Taxonomy" id="585056"/>
    <lineage>
        <taxon>Bacteria</taxon>
        <taxon>Pseudomonadati</taxon>
        <taxon>Pseudomonadota</taxon>
        <taxon>Gammaproteobacteria</taxon>
        <taxon>Enterobacterales</taxon>
        <taxon>Enterobacteriaceae</taxon>
        <taxon>Escherichia</taxon>
    </lineage>
</organism>
<gene>
    <name evidence="1" type="primary">rplB</name>
    <name type="ordered locus">ECUMN_3790</name>
</gene>
<sequence length="273" mass="29860">MAVVKCKPTSPGRRHVVKVVNPELHKGKPFAPLLEKNSKSGGRNNNGRITTRHIGGGHKQAYRIVDFKRNKDGIPAVVERLEYDPNRSANIALVLYKDGERRYILAPKGLKAGDQIQSGVDAAIKPGNTLPMRNIPVGSTVHNVEMKPGKGGQLARSAGTYVQIVARDGAYVTLRLRSGEMRKVEADCRATLGEVGNAEHMLRVLGKAGAARWRGVRPTVRGTAMNPVDHPHGGGEGRNFGKHPVTPWGVQTKGKKTRSNKRTDKFIVRRRSK</sequence>
<protein>
    <recommendedName>
        <fullName evidence="1">Large ribosomal subunit protein uL2</fullName>
    </recommendedName>
    <alternativeName>
        <fullName evidence="3">50S ribosomal protein L2</fullName>
    </alternativeName>
</protein>
<reference key="1">
    <citation type="journal article" date="2009" name="PLoS Genet.">
        <title>Organised genome dynamics in the Escherichia coli species results in highly diverse adaptive paths.</title>
        <authorList>
            <person name="Touchon M."/>
            <person name="Hoede C."/>
            <person name="Tenaillon O."/>
            <person name="Barbe V."/>
            <person name="Baeriswyl S."/>
            <person name="Bidet P."/>
            <person name="Bingen E."/>
            <person name="Bonacorsi S."/>
            <person name="Bouchier C."/>
            <person name="Bouvet O."/>
            <person name="Calteau A."/>
            <person name="Chiapello H."/>
            <person name="Clermont O."/>
            <person name="Cruveiller S."/>
            <person name="Danchin A."/>
            <person name="Diard M."/>
            <person name="Dossat C."/>
            <person name="Karoui M.E."/>
            <person name="Frapy E."/>
            <person name="Garry L."/>
            <person name="Ghigo J.M."/>
            <person name="Gilles A.M."/>
            <person name="Johnson J."/>
            <person name="Le Bouguenec C."/>
            <person name="Lescat M."/>
            <person name="Mangenot S."/>
            <person name="Martinez-Jehanne V."/>
            <person name="Matic I."/>
            <person name="Nassif X."/>
            <person name="Oztas S."/>
            <person name="Petit M.A."/>
            <person name="Pichon C."/>
            <person name="Rouy Z."/>
            <person name="Ruf C.S."/>
            <person name="Schneider D."/>
            <person name="Tourret J."/>
            <person name="Vacherie B."/>
            <person name="Vallenet D."/>
            <person name="Medigue C."/>
            <person name="Rocha E.P.C."/>
            <person name="Denamur E."/>
        </authorList>
    </citation>
    <scope>NUCLEOTIDE SEQUENCE [LARGE SCALE GENOMIC DNA]</scope>
    <source>
        <strain>UMN026 / ExPEC</strain>
    </source>
</reference>
<evidence type="ECO:0000255" key="1">
    <source>
        <dbReference type="HAMAP-Rule" id="MF_01320"/>
    </source>
</evidence>
<evidence type="ECO:0000256" key="2">
    <source>
        <dbReference type="SAM" id="MobiDB-lite"/>
    </source>
</evidence>
<evidence type="ECO:0000305" key="3"/>